<gene>
    <name evidence="1" type="primary">rplI</name>
    <name type="ordered locus">BURPS1106A_2288</name>
</gene>
<proteinExistence type="inferred from homology"/>
<organism>
    <name type="scientific">Burkholderia pseudomallei (strain 1106a)</name>
    <dbReference type="NCBI Taxonomy" id="357348"/>
    <lineage>
        <taxon>Bacteria</taxon>
        <taxon>Pseudomonadati</taxon>
        <taxon>Pseudomonadota</taxon>
        <taxon>Betaproteobacteria</taxon>
        <taxon>Burkholderiales</taxon>
        <taxon>Burkholderiaceae</taxon>
        <taxon>Burkholderia</taxon>
        <taxon>pseudomallei group</taxon>
    </lineage>
</organism>
<accession>A3NW31</accession>
<sequence length="150" mass="16245">MQIILLEKVANLGNLGDIVKVKDGYARNFLIPNRKARRATKDAIAEFEVRRAELEKVAAEKLAAAQAVGEKLNGQTFEITQKSGVDGRLFGSVTNGDVAELLKKAGYEIEKAQVRMPEGPLKMIGEHGVQVALHTDVVVDVTVNVIGDHA</sequence>
<keyword id="KW-0687">Ribonucleoprotein</keyword>
<keyword id="KW-0689">Ribosomal protein</keyword>
<keyword id="KW-0694">RNA-binding</keyword>
<keyword id="KW-0699">rRNA-binding</keyword>
<feature type="chain" id="PRO_1000014754" description="Large ribosomal subunit protein bL9">
    <location>
        <begin position="1"/>
        <end position="150"/>
    </location>
</feature>
<protein>
    <recommendedName>
        <fullName evidence="1">Large ribosomal subunit protein bL9</fullName>
    </recommendedName>
    <alternativeName>
        <fullName evidence="2">50S ribosomal protein L9</fullName>
    </alternativeName>
</protein>
<evidence type="ECO:0000255" key="1">
    <source>
        <dbReference type="HAMAP-Rule" id="MF_00503"/>
    </source>
</evidence>
<evidence type="ECO:0000305" key="2"/>
<dbReference type="EMBL" id="CP000572">
    <property type="protein sequence ID" value="ABN89670.1"/>
    <property type="molecule type" value="Genomic_DNA"/>
</dbReference>
<dbReference type="RefSeq" id="WP_004191711.1">
    <property type="nucleotide sequence ID" value="NC_009076.1"/>
</dbReference>
<dbReference type="SMR" id="A3NW31"/>
<dbReference type="GeneID" id="93060530"/>
<dbReference type="KEGG" id="bpl:BURPS1106A_2288"/>
<dbReference type="HOGENOM" id="CLU_078938_4_1_4"/>
<dbReference type="Proteomes" id="UP000006738">
    <property type="component" value="Chromosome I"/>
</dbReference>
<dbReference type="GO" id="GO:1990904">
    <property type="term" value="C:ribonucleoprotein complex"/>
    <property type="evidence" value="ECO:0007669"/>
    <property type="project" value="UniProtKB-KW"/>
</dbReference>
<dbReference type="GO" id="GO:0005840">
    <property type="term" value="C:ribosome"/>
    <property type="evidence" value="ECO:0007669"/>
    <property type="project" value="UniProtKB-KW"/>
</dbReference>
<dbReference type="GO" id="GO:0019843">
    <property type="term" value="F:rRNA binding"/>
    <property type="evidence" value="ECO:0007669"/>
    <property type="project" value="UniProtKB-UniRule"/>
</dbReference>
<dbReference type="GO" id="GO:0003735">
    <property type="term" value="F:structural constituent of ribosome"/>
    <property type="evidence" value="ECO:0007669"/>
    <property type="project" value="InterPro"/>
</dbReference>
<dbReference type="GO" id="GO:0006412">
    <property type="term" value="P:translation"/>
    <property type="evidence" value="ECO:0007669"/>
    <property type="project" value="UniProtKB-UniRule"/>
</dbReference>
<dbReference type="Gene3D" id="3.10.430.100">
    <property type="entry name" value="Ribosomal protein L9, C-terminal domain"/>
    <property type="match status" value="1"/>
</dbReference>
<dbReference type="Gene3D" id="3.40.5.10">
    <property type="entry name" value="Ribosomal protein L9, N-terminal domain"/>
    <property type="match status" value="1"/>
</dbReference>
<dbReference type="HAMAP" id="MF_00503">
    <property type="entry name" value="Ribosomal_bL9"/>
    <property type="match status" value="1"/>
</dbReference>
<dbReference type="InterPro" id="IPR000244">
    <property type="entry name" value="Ribosomal_bL9"/>
</dbReference>
<dbReference type="InterPro" id="IPR009027">
    <property type="entry name" value="Ribosomal_bL9/RNase_H1_N"/>
</dbReference>
<dbReference type="InterPro" id="IPR020594">
    <property type="entry name" value="Ribosomal_bL9_bac/chp"/>
</dbReference>
<dbReference type="InterPro" id="IPR020069">
    <property type="entry name" value="Ribosomal_bL9_C"/>
</dbReference>
<dbReference type="InterPro" id="IPR036791">
    <property type="entry name" value="Ribosomal_bL9_C_sf"/>
</dbReference>
<dbReference type="InterPro" id="IPR020070">
    <property type="entry name" value="Ribosomal_bL9_N"/>
</dbReference>
<dbReference type="InterPro" id="IPR036935">
    <property type="entry name" value="Ribosomal_bL9_N_sf"/>
</dbReference>
<dbReference type="NCBIfam" id="TIGR00158">
    <property type="entry name" value="L9"/>
    <property type="match status" value="1"/>
</dbReference>
<dbReference type="PANTHER" id="PTHR21368">
    <property type="entry name" value="50S RIBOSOMAL PROTEIN L9"/>
    <property type="match status" value="1"/>
</dbReference>
<dbReference type="Pfam" id="PF03948">
    <property type="entry name" value="Ribosomal_L9_C"/>
    <property type="match status" value="1"/>
</dbReference>
<dbReference type="Pfam" id="PF01281">
    <property type="entry name" value="Ribosomal_L9_N"/>
    <property type="match status" value="1"/>
</dbReference>
<dbReference type="SUPFAM" id="SSF55658">
    <property type="entry name" value="L9 N-domain-like"/>
    <property type="match status" value="1"/>
</dbReference>
<dbReference type="SUPFAM" id="SSF55653">
    <property type="entry name" value="Ribosomal protein L9 C-domain"/>
    <property type="match status" value="1"/>
</dbReference>
<dbReference type="PROSITE" id="PS00651">
    <property type="entry name" value="RIBOSOMAL_L9"/>
    <property type="match status" value="1"/>
</dbReference>
<name>RL9_BURP0</name>
<reference key="1">
    <citation type="journal article" date="2010" name="Genome Biol. Evol.">
        <title>Continuing evolution of Burkholderia mallei through genome reduction and large-scale rearrangements.</title>
        <authorList>
            <person name="Losada L."/>
            <person name="Ronning C.M."/>
            <person name="DeShazer D."/>
            <person name="Woods D."/>
            <person name="Fedorova N."/>
            <person name="Kim H.S."/>
            <person name="Shabalina S.A."/>
            <person name="Pearson T.R."/>
            <person name="Brinkac L."/>
            <person name="Tan P."/>
            <person name="Nandi T."/>
            <person name="Crabtree J."/>
            <person name="Badger J."/>
            <person name="Beckstrom-Sternberg S."/>
            <person name="Saqib M."/>
            <person name="Schutzer S.E."/>
            <person name="Keim P."/>
            <person name="Nierman W.C."/>
        </authorList>
    </citation>
    <scope>NUCLEOTIDE SEQUENCE [LARGE SCALE GENOMIC DNA]</scope>
    <source>
        <strain>1106a</strain>
    </source>
</reference>
<comment type="function">
    <text evidence="1">Binds to the 23S rRNA.</text>
</comment>
<comment type="similarity">
    <text evidence="1">Belongs to the bacterial ribosomal protein bL9 family.</text>
</comment>